<evidence type="ECO:0000250" key="1"/>
<evidence type="ECO:0000255" key="2"/>
<evidence type="ECO:0000255" key="3">
    <source>
        <dbReference type="PROSITE-ProRule" id="PRU00316"/>
    </source>
</evidence>
<evidence type="ECO:0000255" key="4">
    <source>
        <dbReference type="PROSITE-ProRule" id="PRU00548"/>
    </source>
</evidence>
<evidence type="ECO:0000255" key="5">
    <source>
        <dbReference type="PROSITE-ProRule" id="PRU00586"/>
    </source>
</evidence>
<evidence type="ECO:0000256" key="6">
    <source>
        <dbReference type="SAM" id="MobiDB-lite"/>
    </source>
</evidence>
<protein>
    <recommendedName>
        <fullName>Fibronectin type III and SPRY domain-containing protein 1</fullName>
    </recommendedName>
</protein>
<keyword id="KW-0131">Cell cycle</keyword>
<keyword id="KW-0132">Cell division</keyword>
<keyword id="KW-0175">Coiled coil</keyword>
<keyword id="KW-0963">Cytoplasm</keyword>
<keyword id="KW-0206">Cytoskeleton</keyword>
<keyword id="KW-0493">Microtubule</keyword>
<keyword id="KW-0498">Mitosis</keyword>
<keyword id="KW-0539">Nucleus</keyword>
<keyword id="KW-0597">Phosphoprotein</keyword>
<keyword id="KW-1185">Reference proteome</keyword>
<feature type="chain" id="PRO_0000316540" description="Fibronectin type III and SPRY domain-containing protein 1">
    <location>
        <begin position="1"/>
        <end position="495"/>
    </location>
</feature>
<feature type="domain" description="COS" evidence="5">
    <location>
        <begin position="105"/>
        <end position="162"/>
    </location>
</feature>
<feature type="domain" description="Fibronectin type-III" evidence="3">
    <location>
        <begin position="164"/>
        <end position="268"/>
    </location>
</feature>
<feature type="domain" description="B30.2/SPRY" evidence="4">
    <location>
        <begin position="281"/>
        <end position="476"/>
    </location>
</feature>
<feature type="region of interest" description="Disordered" evidence="6">
    <location>
        <begin position="306"/>
        <end position="332"/>
    </location>
</feature>
<feature type="coiled-coil region" evidence="2">
    <location>
        <begin position="4"/>
        <end position="99"/>
    </location>
</feature>
<feature type="modified residue" description="Phosphoserine" evidence="1">
    <location>
        <position position="490"/>
    </location>
</feature>
<reference key="1">
    <citation type="journal article" date="2013" name="Nature">
        <title>The zebrafish reference genome sequence and its relationship to the human genome.</title>
        <authorList>
            <person name="Howe K."/>
            <person name="Clark M.D."/>
            <person name="Torroja C.F."/>
            <person name="Torrance J."/>
            <person name="Berthelot C."/>
            <person name="Muffato M."/>
            <person name="Collins J.E."/>
            <person name="Humphray S."/>
            <person name="McLaren K."/>
            <person name="Matthews L."/>
            <person name="McLaren S."/>
            <person name="Sealy I."/>
            <person name="Caccamo M."/>
            <person name="Churcher C."/>
            <person name="Scott C."/>
            <person name="Barrett J.C."/>
            <person name="Koch R."/>
            <person name="Rauch G.J."/>
            <person name="White S."/>
            <person name="Chow W."/>
            <person name="Kilian B."/>
            <person name="Quintais L.T."/>
            <person name="Guerra-Assuncao J.A."/>
            <person name="Zhou Y."/>
            <person name="Gu Y."/>
            <person name="Yen J."/>
            <person name="Vogel J.H."/>
            <person name="Eyre T."/>
            <person name="Redmond S."/>
            <person name="Banerjee R."/>
            <person name="Chi J."/>
            <person name="Fu B."/>
            <person name="Langley E."/>
            <person name="Maguire S.F."/>
            <person name="Laird G.K."/>
            <person name="Lloyd D."/>
            <person name="Kenyon E."/>
            <person name="Donaldson S."/>
            <person name="Sehra H."/>
            <person name="Almeida-King J."/>
            <person name="Loveland J."/>
            <person name="Trevanion S."/>
            <person name="Jones M."/>
            <person name="Quail M."/>
            <person name="Willey D."/>
            <person name="Hunt A."/>
            <person name="Burton J."/>
            <person name="Sims S."/>
            <person name="McLay K."/>
            <person name="Plumb B."/>
            <person name="Davis J."/>
            <person name="Clee C."/>
            <person name="Oliver K."/>
            <person name="Clark R."/>
            <person name="Riddle C."/>
            <person name="Elliot D."/>
            <person name="Threadgold G."/>
            <person name="Harden G."/>
            <person name="Ware D."/>
            <person name="Begum S."/>
            <person name="Mortimore B."/>
            <person name="Kerry G."/>
            <person name="Heath P."/>
            <person name="Phillimore B."/>
            <person name="Tracey A."/>
            <person name="Corby N."/>
            <person name="Dunn M."/>
            <person name="Johnson C."/>
            <person name="Wood J."/>
            <person name="Clark S."/>
            <person name="Pelan S."/>
            <person name="Griffiths G."/>
            <person name="Smith M."/>
            <person name="Glithero R."/>
            <person name="Howden P."/>
            <person name="Barker N."/>
            <person name="Lloyd C."/>
            <person name="Stevens C."/>
            <person name="Harley J."/>
            <person name="Holt K."/>
            <person name="Panagiotidis G."/>
            <person name="Lovell J."/>
            <person name="Beasley H."/>
            <person name="Henderson C."/>
            <person name="Gordon D."/>
            <person name="Auger K."/>
            <person name="Wright D."/>
            <person name="Collins J."/>
            <person name="Raisen C."/>
            <person name="Dyer L."/>
            <person name="Leung K."/>
            <person name="Robertson L."/>
            <person name="Ambridge K."/>
            <person name="Leongamornlert D."/>
            <person name="McGuire S."/>
            <person name="Gilderthorp R."/>
            <person name="Griffiths C."/>
            <person name="Manthravadi D."/>
            <person name="Nichol S."/>
            <person name="Barker G."/>
            <person name="Whitehead S."/>
            <person name="Kay M."/>
            <person name="Brown J."/>
            <person name="Murnane C."/>
            <person name="Gray E."/>
            <person name="Humphries M."/>
            <person name="Sycamore N."/>
            <person name="Barker D."/>
            <person name="Saunders D."/>
            <person name="Wallis J."/>
            <person name="Babbage A."/>
            <person name="Hammond S."/>
            <person name="Mashreghi-Mohammadi M."/>
            <person name="Barr L."/>
            <person name="Martin S."/>
            <person name="Wray P."/>
            <person name="Ellington A."/>
            <person name="Matthews N."/>
            <person name="Ellwood M."/>
            <person name="Woodmansey R."/>
            <person name="Clark G."/>
            <person name="Cooper J."/>
            <person name="Tromans A."/>
            <person name="Grafham D."/>
            <person name="Skuce C."/>
            <person name="Pandian R."/>
            <person name="Andrews R."/>
            <person name="Harrison E."/>
            <person name="Kimberley A."/>
            <person name="Garnett J."/>
            <person name="Fosker N."/>
            <person name="Hall R."/>
            <person name="Garner P."/>
            <person name="Kelly D."/>
            <person name="Bird C."/>
            <person name="Palmer S."/>
            <person name="Gehring I."/>
            <person name="Berger A."/>
            <person name="Dooley C.M."/>
            <person name="Ersan-Urun Z."/>
            <person name="Eser C."/>
            <person name="Geiger H."/>
            <person name="Geisler M."/>
            <person name="Karotki L."/>
            <person name="Kirn A."/>
            <person name="Konantz J."/>
            <person name="Konantz M."/>
            <person name="Oberlander M."/>
            <person name="Rudolph-Geiger S."/>
            <person name="Teucke M."/>
            <person name="Lanz C."/>
            <person name="Raddatz G."/>
            <person name="Osoegawa K."/>
            <person name="Zhu B."/>
            <person name="Rapp A."/>
            <person name="Widaa S."/>
            <person name="Langford C."/>
            <person name="Yang F."/>
            <person name="Schuster S.C."/>
            <person name="Carter N.P."/>
            <person name="Harrow J."/>
            <person name="Ning Z."/>
            <person name="Herrero J."/>
            <person name="Searle S.M."/>
            <person name="Enright A."/>
            <person name="Geisler R."/>
            <person name="Plasterk R.H."/>
            <person name="Lee C."/>
            <person name="Westerfield M."/>
            <person name="de Jong P.J."/>
            <person name="Zon L.I."/>
            <person name="Postlethwait J.H."/>
            <person name="Nusslein-Volhard C."/>
            <person name="Hubbard T.J."/>
            <person name="Roest Crollius H."/>
            <person name="Rogers J."/>
            <person name="Stemple D.L."/>
        </authorList>
    </citation>
    <scope>NUCLEOTIDE SEQUENCE [LARGE SCALE GENOMIC DNA]</scope>
    <source>
        <strain>Tuebingen</strain>
    </source>
</reference>
<name>FSD1_DANRE</name>
<dbReference type="EMBL" id="BX247907">
    <property type="protein sequence ID" value="CAK04612.1"/>
    <property type="molecule type" value="Genomic_DNA"/>
</dbReference>
<dbReference type="RefSeq" id="NP_001038582.1">
    <property type="nucleotide sequence ID" value="NM_001045117.3"/>
</dbReference>
<dbReference type="FunCoup" id="Q1LY10">
    <property type="interactions" value="658"/>
</dbReference>
<dbReference type="STRING" id="7955.ENSDARP00000083574"/>
<dbReference type="PaxDb" id="7955-ENSDARP00000083574"/>
<dbReference type="Ensembl" id="ENSDART00000089141">
    <property type="protein sequence ID" value="ENSDARP00000083574"/>
    <property type="gene ID" value="ENSDARG00000062017"/>
</dbReference>
<dbReference type="GeneID" id="566722"/>
<dbReference type="KEGG" id="dre:566722"/>
<dbReference type="AGR" id="ZFIN:ZDB-GENE-060503-218"/>
<dbReference type="CTD" id="79187"/>
<dbReference type="ZFIN" id="ZDB-GENE-060503-218">
    <property type="gene designation" value="fsd1"/>
</dbReference>
<dbReference type="eggNOG" id="KOG2177">
    <property type="taxonomic scope" value="Eukaryota"/>
</dbReference>
<dbReference type="InParanoid" id="Q1LY10"/>
<dbReference type="OMA" id="PARCAQS"/>
<dbReference type="OrthoDB" id="9927450at2759"/>
<dbReference type="PhylomeDB" id="Q1LY10"/>
<dbReference type="PRO" id="PR:Q1LY10"/>
<dbReference type="Proteomes" id="UP000000437">
    <property type="component" value="Chromosome 8"/>
</dbReference>
<dbReference type="Bgee" id="ENSDARG00000062017">
    <property type="expression patterns" value="Expressed in brain and 10 other cell types or tissues"/>
</dbReference>
<dbReference type="ExpressionAtlas" id="Q1LY10">
    <property type="expression patterns" value="baseline"/>
</dbReference>
<dbReference type="GO" id="GO:0005813">
    <property type="term" value="C:centrosome"/>
    <property type="evidence" value="ECO:0007669"/>
    <property type="project" value="UniProtKB-SubCell"/>
</dbReference>
<dbReference type="GO" id="GO:0032154">
    <property type="term" value="C:cleavage furrow"/>
    <property type="evidence" value="ECO:0007669"/>
    <property type="project" value="UniProtKB-SubCell"/>
</dbReference>
<dbReference type="GO" id="GO:0005737">
    <property type="term" value="C:cytoplasm"/>
    <property type="evidence" value="ECO:0007669"/>
    <property type="project" value="UniProtKB-SubCell"/>
</dbReference>
<dbReference type="GO" id="GO:0005874">
    <property type="term" value="C:microtubule"/>
    <property type="evidence" value="ECO:0000318"/>
    <property type="project" value="GO_Central"/>
</dbReference>
<dbReference type="GO" id="GO:0005634">
    <property type="term" value="C:nucleus"/>
    <property type="evidence" value="ECO:0007669"/>
    <property type="project" value="UniProtKB-SubCell"/>
</dbReference>
<dbReference type="GO" id="GO:0008017">
    <property type="term" value="F:microtubule binding"/>
    <property type="evidence" value="ECO:0000318"/>
    <property type="project" value="GO_Central"/>
</dbReference>
<dbReference type="GO" id="GO:0051301">
    <property type="term" value="P:cell division"/>
    <property type="evidence" value="ECO:0007669"/>
    <property type="project" value="UniProtKB-KW"/>
</dbReference>
<dbReference type="GO" id="GO:0060271">
    <property type="term" value="P:cilium assembly"/>
    <property type="evidence" value="ECO:0000315"/>
    <property type="project" value="ZFIN"/>
</dbReference>
<dbReference type="GO" id="GO:0007219">
    <property type="term" value="P:Notch signaling pathway"/>
    <property type="evidence" value="ECO:0000315"/>
    <property type="project" value="ZFIN"/>
</dbReference>
<dbReference type="GO" id="GO:0051302">
    <property type="term" value="P:regulation of cell division"/>
    <property type="evidence" value="ECO:0000318"/>
    <property type="project" value="GO_Central"/>
</dbReference>
<dbReference type="GO" id="GO:0060236">
    <property type="term" value="P:regulation of mitotic spindle organization"/>
    <property type="evidence" value="ECO:0000318"/>
    <property type="project" value="GO_Central"/>
</dbReference>
<dbReference type="CDD" id="cd00063">
    <property type="entry name" value="FN3"/>
    <property type="match status" value="1"/>
</dbReference>
<dbReference type="CDD" id="cd12901">
    <property type="entry name" value="SPRY_PRY_FSD1"/>
    <property type="match status" value="1"/>
</dbReference>
<dbReference type="Gene3D" id="1.20.5.170">
    <property type="match status" value="1"/>
</dbReference>
<dbReference type="Gene3D" id="2.60.120.920">
    <property type="match status" value="1"/>
</dbReference>
<dbReference type="Gene3D" id="2.60.40.10">
    <property type="entry name" value="Immunoglobulins"/>
    <property type="match status" value="1"/>
</dbReference>
<dbReference type="InterPro" id="IPR001870">
    <property type="entry name" value="B30.2/SPRY"/>
</dbReference>
<dbReference type="InterPro" id="IPR043136">
    <property type="entry name" value="B30.2/SPRY_sf"/>
</dbReference>
<dbReference type="InterPro" id="IPR003649">
    <property type="entry name" value="Bbox_C"/>
</dbReference>
<dbReference type="InterPro" id="IPR003879">
    <property type="entry name" value="Butyrophylin_SPRY"/>
</dbReference>
<dbReference type="InterPro" id="IPR013320">
    <property type="entry name" value="ConA-like_dom_sf"/>
</dbReference>
<dbReference type="InterPro" id="IPR017903">
    <property type="entry name" value="COS_domain"/>
</dbReference>
<dbReference type="InterPro" id="IPR050617">
    <property type="entry name" value="E3_ligase_FN3/SPRY"/>
</dbReference>
<dbReference type="InterPro" id="IPR003961">
    <property type="entry name" value="FN3_dom"/>
</dbReference>
<dbReference type="InterPro" id="IPR036116">
    <property type="entry name" value="FN3_sf"/>
</dbReference>
<dbReference type="InterPro" id="IPR013783">
    <property type="entry name" value="Ig-like_fold"/>
</dbReference>
<dbReference type="InterPro" id="IPR035742">
    <property type="entry name" value="SPRY/PRY_FSD1"/>
</dbReference>
<dbReference type="InterPro" id="IPR003877">
    <property type="entry name" value="SPRY_dom"/>
</dbReference>
<dbReference type="PANTHER" id="PTHR24099">
    <property type="entry name" value="E3 UBIQUITIN-PROTEIN LIGASE TRIM36-RELATED"/>
    <property type="match status" value="1"/>
</dbReference>
<dbReference type="PANTHER" id="PTHR24099:SF4">
    <property type="entry name" value="FIBRONECTIN TYPE III AND SPRY DOMAIN-CONTAINING PROTEIN 1"/>
    <property type="match status" value="1"/>
</dbReference>
<dbReference type="Pfam" id="PF00041">
    <property type="entry name" value="fn3"/>
    <property type="match status" value="1"/>
</dbReference>
<dbReference type="Pfam" id="PF00622">
    <property type="entry name" value="SPRY"/>
    <property type="match status" value="1"/>
</dbReference>
<dbReference type="PRINTS" id="PR01407">
    <property type="entry name" value="BUTYPHLNCDUF"/>
</dbReference>
<dbReference type="SMART" id="SM00502">
    <property type="entry name" value="BBC"/>
    <property type="match status" value="1"/>
</dbReference>
<dbReference type="SMART" id="SM00449">
    <property type="entry name" value="SPRY"/>
    <property type="match status" value="1"/>
</dbReference>
<dbReference type="SUPFAM" id="SSF49899">
    <property type="entry name" value="Concanavalin A-like lectins/glucanases"/>
    <property type="match status" value="1"/>
</dbReference>
<dbReference type="SUPFAM" id="SSF49265">
    <property type="entry name" value="Fibronectin type III"/>
    <property type="match status" value="1"/>
</dbReference>
<dbReference type="PROSITE" id="PS50188">
    <property type="entry name" value="B302_SPRY"/>
    <property type="match status" value="1"/>
</dbReference>
<dbReference type="PROSITE" id="PS51262">
    <property type="entry name" value="COS"/>
    <property type="match status" value="1"/>
</dbReference>
<dbReference type="PROSITE" id="PS50853">
    <property type="entry name" value="FN3"/>
    <property type="match status" value="1"/>
</dbReference>
<accession>Q1LY10</accession>
<gene>
    <name type="primary">fsd1</name>
    <name type="ORF">si:ch211-232d19.3</name>
</gene>
<organism>
    <name type="scientific">Danio rerio</name>
    <name type="common">Zebrafish</name>
    <name type="synonym">Brachydanio rerio</name>
    <dbReference type="NCBI Taxonomy" id="7955"/>
    <lineage>
        <taxon>Eukaryota</taxon>
        <taxon>Metazoa</taxon>
        <taxon>Chordata</taxon>
        <taxon>Craniata</taxon>
        <taxon>Vertebrata</taxon>
        <taxon>Euteleostomi</taxon>
        <taxon>Actinopterygii</taxon>
        <taxon>Neopterygii</taxon>
        <taxon>Teleostei</taxon>
        <taxon>Ostariophysi</taxon>
        <taxon>Cypriniformes</taxon>
        <taxon>Danionidae</taxon>
        <taxon>Danioninae</taxon>
        <taxon>Danio</taxon>
    </lineage>
</organism>
<sequence>MDDQKESLRKIITTLALKNEEIQNFICSLKQSLENLEANSNRVQEDLESEFSSLHSVLDDLKEGMVTRIKQERASRTYELQSQLGACTKALESSEELLEFANQTLCSSENDSFTQAAKDIKDSVTMAPAFRLSLKAKASDSMNHMMVDFTHERNLLQSITFLPVPATPEIHVADCQVFDNTVTVVWTLPEPDSKIDHYILEHRKTNHEGPPRAREDYPWMVVEGIKETEYTLTGVRFDTRYMTFRVKACNKAVAGEFSEPVTLETHAFVFKLDASSSHQNLKVEDLSVEWDSSGGKVAVQDIRKEKNRTNSPMHSPARTAMMSPKRAPSARVGRDRFTAESYTVLGDTMIDAGQHYWEVRFDKESKAFAAGVALRSLGRFDQLGKSNASWCIHLNNWLQQSLTAKHNNKARTLDCSIPDRIGIYCNYEEGTLSFYNSRNKTLLHTFRTKFQQPVIPAFMVWNGSFSVQTGLQVPSIVLSGQKRNSNTSSSNASLT</sequence>
<proteinExistence type="inferred from homology"/>
<comment type="function">
    <text evidence="1">May be involved in microtubule organization and stabilization.</text>
</comment>
<comment type="subunit">
    <text evidence="1">Oligomerization is required for binding to microtubules.</text>
</comment>
<comment type="subcellular location">
    <subcellularLocation>
        <location evidence="1">Cytoplasm</location>
        <location evidence="1">Cytoskeleton</location>
        <location evidence="1">Microtubule organizing center</location>
        <location evidence="1">Centrosome</location>
    </subcellularLocation>
    <subcellularLocation>
        <location evidence="1">Nucleus</location>
    </subcellularLocation>
    <subcellularLocation>
        <location evidence="1">Cytoplasm</location>
    </subcellularLocation>
    <subcellularLocation>
        <location evidence="1">Cleavage furrow</location>
    </subcellularLocation>
    <text evidence="1">Cell-cycle-dependent association with the centrosome. Colocalizes with a subpopulation of microtubules. Does not associate with microtubules during mitosis but reassociates with microtubules during cytokinesis. Localizes to the central portions of a small subset of microtubules in interphase cells and a subpopulation of microtubules in the cleavage furrow, not present in the mitotic spindle (By similarity).</text>
</comment>
<comment type="domain">
    <text>B30.2 box contains a microtubule-binding site.</text>
</comment>